<name>MATK_FILMA</name>
<proteinExistence type="inferred from homology"/>
<comment type="function">
    <text evidence="1">Usually encoded in the trnK tRNA gene intron. Probably assists in splicing its own and other chloroplast group II introns.</text>
</comment>
<comment type="subcellular location">
    <subcellularLocation>
        <location>Plastid</location>
        <location>Chloroplast</location>
    </subcellularLocation>
</comment>
<comment type="similarity">
    <text evidence="1">Belongs to the intron maturase 2 family. MatK subfamily.</text>
</comment>
<geneLocation type="chloroplast"/>
<accession>Q8MEC7</accession>
<protein>
    <recommendedName>
        <fullName evidence="1">Maturase K</fullName>
    </recommendedName>
    <alternativeName>
        <fullName evidence="1">Intron maturase</fullName>
    </alternativeName>
</protein>
<organism>
    <name type="scientific">Filarum manserichense</name>
    <dbReference type="NCBI Taxonomy" id="175761"/>
    <lineage>
        <taxon>Eukaryota</taxon>
        <taxon>Viridiplantae</taxon>
        <taxon>Streptophyta</taxon>
        <taxon>Embryophyta</taxon>
        <taxon>Tracheophyta</taxon>
        <taxon>Spermatophyta</taxon>
        <taxon>Magnoliopsida</taxon>
        <taxon>Liliopsida</taxon>
        <taxon>Araceae</taxon>
        <taxon>Aroideae</taxon>
        <taxon>Caladieae</taxon>
        <taxon>Filarum</taxon>
    </lineage>
</organism>
<keyword id="KW-0150">Chloroplast</keyword>
<keyword id="KW-0507">mRNA processing</keyword>
<keyword id="KW-0934">Plastid</keyword>
<keyword id="KW-0694">RNA-binding</keyword>
<keyword id="KW-0819">tRNA processing</keyword>
<evidence type="ECO:0000255" key="1">
    <source>
        <dbReference type="HAMAP-Rule" id="MF_01390"/>
    </source>
</evidence>
<reference key="1">
    <citation type="submission" date="2001-05" db="EMBL/GenBank/DDBJ databases">
        <title>Phylogenetic relationships of the tribe Thomsonieae (Araceae) based on chloroplast matK and trnL intron sequences.</title>
        <authorList>
            <person name="Grob G.B.J."/>
            <person name="Gravendeel B."/>
            <person name="Eurlings M.C.M."/>
            <person name="Hetterscheid W.L.A."/>
        </authorList>
    </citation>
    <scope>NUCLEOTIDE SEQUENCE [GENOMIC DNA]</scope>
</reference>
<sequence length="512" mass="60648">MEELKGYLEKSRSKQQHFLYPLLFQEYIFVLAHDHGLNVNGSIFYEPAEISGYDKKFSSLLVKRLITRMYQQNYLINSVNDSNQNRFVGHNKNFDSQMISEGFAVIVEIPFSLRLVSSLEEKKEIQKSQNLRSIHSIFPFFEDKLSHLICVLDILIPYPVHLEILVQILQCWIQDVPSLHLLRFFFHEYNNWSNLITPKKSNYYGFSKENPRLFLFLYNSYVVECESIFVFLRKQSSYLRSTSSGTFLERTHFHEKIEQHLVVLCCNDFQKTLWLFKDPFMHYVRYQGKSILASKGTRFLMKKWKSYFVNFWQCHFHFWSQSCRIHINQFPNFSLHFLGYLSSVPINPSAVKSQMLENSFLIDTVTKKFETLVPIISMIGSLSKAKFCNVSGNPISKPVWADLSDSDIIDRFGRICRNLSHYYSGSSKKQSLYRIKYILRLSCARTLARKHKSTVRAFLQRLGSEFLEEFFTEEEKVLSLILPRISYPLHKLYRERIWYLDIIRINDLVNHL</sequence>
<feature type="chain" id="PRO_0000143389" description="Maturase K">
    <location>
        <begin position="1"/>
        <end position="512"/>
    </location>
</feature>
<gene>
    <name evidence="1" type="primary">matK</name>
</gene>
<dbReference type="EMBL" id="AF387429">
    <property type="protein sequence ID" value="AAM46604.1"/>
    <property type="molecule type" value="Genomic_DNA"/>
</dbReference>
<dbReference type="GO" id="GO:0009507">
    <property type="term" value="C:chloroplast"/>
    <property type="evidence" value="ECO:0007669"/>
    <property type="project" value="UniProtKB-SubCell"/>
</dbReference>
<dbReference type="GO" id="GO:0003723">
    <property type="term" value="F:RNA binding"/>
    <property type="evidence" value="ECO:0007669"/>
    <property type="project" value="UniProtKB-KW"/>
</dbReference>
<dbReference type="GO" id="GO:0006397">
    <property type="term" value="P:mRNA processing"/>
    <property type="evidence" value="ECO:0007669"/>
    <property type="project" value="UniProtKB-KW"/>
</dbReference>
<dbReference type="GO" id="GO:0008380">
    <property type="term" value="P:RNA splicing"/>
    <property type="evidence" value="ECO:0007669"/>
    <property type="project" value="UniProtKB-UniRule"/>
</dbReference>
<dbReference type="GO" id="GO:0008033">
    <property type="term" value="P:tRNA processing"/>
    <property type="evidence" value="ECO:0007669"/>
    <property type="project" value="UniProtKB-KW"/>
</dbReference>
<dbReference type="HAMAP" id="MF_01390">
    <property type="entry name" value="MatK"/>
    <property type="match status" value="1"/>
</dbReference>
<dbReference type="InterPro" id="IPR024937">
    <property type="entry name" value="Domain_X"/>
</dbReference>
<dbReference type="InterPro" id="IPR002866">
    <property type="entry name" value="Maturase_MatK"/>
</dbReference>
<dbReference type="InterPro" id="IPR024942">
    <property type="entry name" value="Maturase_MatK_N"/>
</dbReference>
<dbReference type="PANTHER" id="PTHR34811">
    <property type="entry name" value="MATURASE K"/>
    <property type="match status" value="1"/>
</dbReference>
<dbReference type="PANTHER" id="PTHR34811:SF1">
    <property type="entry name" value="MATURASE K"/>
    <property type="match status" value="1"/>
</dbReference>
<dbReference type="Pfam" id="PF01348">
    <property type="entry name" value="Intron_maturas2"/>
    <property type="match status" value="1"/>
</dbReference>
<dbReference type="Pfam" id="PF01824">
    <property type="entry name" value="MatK_N"/>
    <property type="match status" value="1"/>
</dbReference>